<sequence>MLACLLITFTCEACKMGESKNLHDEIKILEKINRHFSDEFTKFFSNFLKNSVELVSCSIKIGSCTSNKEIITNLRCLNLIEILPYKKKSFIIFPYNFLSNIIDILFGGQGDFKDHTKKIRDITSTESLVNKKIMKFITNAFSEIYKKYFVKEINFFNTKTFFDFKKYNFDLNKLFLINCFNFKINNTEIFFNFLIPKSILKYQNEKKFFSTYDSHKNTCIEKNIENKVSLNDIYNVEVNIISKIIGISVSYDKIYNLSIGDVLSIKKPNKITGFIQDQAIFLGNYKRFNEQSIIFIEEFIDSSSESNQDKEYSNE</sequence>
<organism>
    <name type="scientific">Buchnera aphidicola subsp. Acyrthosiphon pisum (strain APS)</name>
    <name type="common">Acyrthosiphon pisum symbiotic bacterium</name>
    <dbReference type="NCBI Taxonomy" id="107806"/>
    <lineage>
        <taxon>Bacteria</taxon>
        <taxon>Pseudomonadati</taxon>
        <taxon>Pseudomonadota</taxon>
        <taxon>Gammaproteobacteria</taxon>
        <taxon>Enterobacterales</taxon>
        <taxon>Erwiniaceae</taxon>
        <taxon>Buchnera</taxon>
    </lineage>
</organism>
<gene>
    <name type="primary">fliM</name>
    <name type="ordered locus">BU080</name>
</gene>
<feature type="chain" id="PRO_0000180924" description="Flagellar motor switch protein FliM">
    <location>
        <begin position="1"/>
        <end position="315"/>
    </location>
</feature>
<proteinExistence type="inferred from homology"/>
<accession>P57182</accession>
<keyword id="KW-0975">Bacterial flagellum</keyword>
<keyword id="KW-0997">Cell inner membrane</keyword>
<keyword id="KW-1003">Cell membrane</keyword>
<keyword id="KW-0145">Chemotaxis</keyword>
<keyword id="KW-0283">Flagellar rotation</keyword>
<keyword id="KW-0472">Membrane</keyword>
<keyword id="KW-1185">Reference proteome</keyword>
<evidence type="ECO:0000250" key="1"/>
<evidence type="ECO:0000305" key="2"/>
<reference key="1">
    <citation type="journal article" date="2000" name="Nature">
        <title>Genome sequence of the endocellular bacterial symbiont of aphids Buchnera sp. APS.</title>
        <authorList>
            <person name="Shigenobu S."/>
            <person name="Watanabe H."/>
            <person name="Hattori M."/>
            <person name="Sakaki Y."/>
            <person name="Ishikawa H."/>
        </authorList>
    </citation>
    <scope>NUCLEOTIDE SEQUENCE [LARGE SCALE GENOMIC DNA]</scope>
    <source>
        <strain>APS</strain>
    </source>
</reference>
<comment type="function">
    <text evidence="1">FliM is one of three proteins (FliG, FliN, FliM) that forms the rotor-mounted switch complex (C ring), located at the base of the basal body. This complex interacts with the CheY and CheZ chemotaxis proteins, in addition to contacting components of the motor that determine the direction of flagellar rotation (By similarity).</text>
</comment>
<comment type="subcellular location">
    <subcellularLocation>
        <location evidence="1">Cell inner membrane</location>
        <topology evidence="1">Peripheral membrane protein</topology>
    </subcellularLocation>
    <subcellularLocation>
        <location evidence="1">Bacterial flagellum basal body</location>
    </subcellularLocation>
</comment>
<comment type="similarity">
    <text evidence="2">Belongs to the FliM family.</text>
</comment>
<protein>
    <recommendedName>
        <fullName>Flagellar motor switch protein FliM</fullName>
    </recommendedName>
</protein>
<name>FLIM_BUCAI</name>
<dbReference type="EMBL" id="BA000003">
    <property type="protein sequence ID" value="BAB12800.1"/>
    <property type="molecule type" value="Genomic_DNA"/>
</dbReference>
<dbReference type="RefSeq" id="NP_239914.1">
    <property type="nucleotide sequence ID" value="NC_002528.1"/>
</dbReference>
<dbReference type="SMR" id="P57182"/>
<dbReference type="STRING" id="563178.BUAP5A_079"/>
<dbReference type="EnsemblBacteria" id="BAB12800">
    <property type="protein sequence ID" value="BAB12800"/>
    <property type="gene ID" value="BAB12800"/>
</dbReference>
<dbReference type="KEGG" id="buc:BU080"/>
<dbReference type="PATRIC" id="fig|107806.10.peg.86"/>
<dbReference type="eggNOG" id="COG1868">
    <property type="taxonomic scope" value="Bacteria"/>
</dbReference>
<dbReference type="HOGENOM" id="CLU_051805_0_0_6"/>
<dbReference type="Proteomes" id="UP000001806">
    <property type="component" value="Chromosome"/>
</dbReference>
<dbReference type="GO" id="GO:0009425">
    <property type="term" value="C:bacterial-type flagellum basal body"/>
    <property type="evidence" value="ECO:0007669"/>
    <property type="project" value="UniProtKB-SubCell"/>
</dbReference>
<dbReference type="GO" id="GO:0005886">
    <property type="term" value="C:plasma membrane"/>
    <property type="evidence" value="ECO:0007669"/>
    <property type="project" value="UniProtKB-SubCell"/>
</dbReference>
<dbReference type="GO" id="GO:0003774">
    <property type="term" value="F:cytoskeletal motor activity"/>
    <property type="evidence" value="ECO:0007669"/>
    <property type="project" value="InterPro"/>
</dbReference>
<dbReference type="GO" id="GO:0071978">
    <property type="term" value="P:bacterial-type flagellum-dependent swarming motility"/>
    <property type="evidence" value="ECO:0007669"/>
    <property type="project" value="TreeGrafter"/>
</dbReference>
<dbReference type="GO" id="GO:0050918">
    <property type="term" value="P:positive chemotaxis"/>
    <property type="evidence" value="ECO:0007669"/>
    <property type="project" value="TreeGrafter"/>
</dbReference>
<dbReference type="Gene3D" id="3.40.1550.10">
    <property type="entry name" value="CheC-like"/>
    <property type="match status" value="1"/>
</dbReference>
<dbReference type="InterPro" id="IPR028976">
    <property type="entry name" value="CheC-like_sf"/>
</dbReference>
<dbReference type="InterPro" id="IPR001689">
    <property type="entry name" value="Flag_FliM"/>
</dbReference>
<dbReference type="InterPro" id="IPR001543">
    <property type="entry name" value="FliN-like_C"/>
</dbReference>
<dbReference type="InterPro" id="IPR036429">
    <property type="entry name" value="SpoA-like_sf"/>
</dbReference>
<dbReference type="PANTHER" id="PTHR30034">
    <property type="entry name" value="FLAGELLAR MOTOR SWITCH PROTEIN FLIM"/>
    <property type="match status" value="1"/>
</dbReference>
<dbReference type="PANTHER" id="PTHR30034:SF6">
    <property type="entry name" value="YOP PROTEINS TRANSLOCATION PROTEIN Q"/>
    <property type="match status" value="1"/>
</dbReference>
<dbReference type="Pfam" id="PF02154">
    <property type="entry name" value="FliM"/>
    <property type="match status" value="1"/>
</dbReference>
<dbReference type="Pfam" id="PF01052">
    <property type="entry name" value="FliMN_C"/>
    <property type="match status" value="1"/>
</dbReference>
<dbReference type="SUPFAM" id="SSF101801">
    <property type="entry name" value="Surface presentation of antigens (SPOA)"/>
    <property type="match status" value="1"/>
</dbReference>